<name>TRHO_RICAH</name>
<dbReference type="EC" id="1.14.-.-" evidence="1"/>
<dbReference type="EMBL" id="CP000847">
    <property type="protein sequence ID" value="ABV74515.1"/>
    <property type="molecule type" value="Genomic_DNA"/>
</dbReference>
<dbReference type="RefSeq" id="WP_012013385.1">
    <property type="nucleotide sequence ID" value="NC_009881.1"/>
</dbReference>
<dbReference type="SMR" id="A8GM90"/>
<dbReference type="STRING" id="293614.A1C_00925"/>
<dbReference type="KEGG" id="rak:A1C_00925"/>
<dbReference type="eggNOG" id="COG1054">
    <property type="taxonomic scope" value="Bacteria"/>
</dbReference>
<dbReference type="HOGENOM" id="CLU_038878_0_1_5"/>
<dbReference type="Proteomes" id="UP000006830">
    <property type="component" value="Chromosome"/>
</dbReference>
<dbReference type="GO" id="GO:0016705">
    <property type="term" value="F:oxidoreductase activity, acting on paired donors, with incorporation or reduction of molecular oxygen"/>
    <property type="evidence" value="ECO:0007669"/>
    <property type="project" value="UniProtKB-UniRule"/>
</dbReference>
<dbReference type="GO" id="GO:0006400">
    <property type="term" value="P:tRNA modification"/>
    <property type="evidence" value="ECO:0007669"/>
    <property type="project" value="UniProtKB-UniRule"/>
</dbReference>
<dbReference type="CDD" id="cd01518">
    <property type="entry name" value="RHOD_YceA"/>
    <property type="match status" value="1"/>
</dbReference>
<dbReference type="Gene3D" id="3.30.70.100">
    <property type="match status" value="1"/>
</dbReference>
<dbReference type="Gene3D" id="3.40.250.10">
    <property type="entry name" value="Rhodanese-like domain"/>
    <property type="match status" value="1"/>
</dbReference>
<dbReference type="HAMAP" id="MF_00469">
    <property type="entry name" value="TrhO"/>
    <property type="match status" value="1"/>
</dbReference>
<dbReference type="InterPro" id="IPR001763">
    <property type="entry name" value="Rhodanese-like_dom"/>
</dbReference>
<dbReference type="InterPro" id="IPR036873">
    <property type="entry name" value="Rhodanese-like_dom_sf"/>
</dbReference>
<dbReference type="InterPro" id="IPR020936">
    <property type="entry name" value="TrhO"/>
</dbReference>
<dbReference type="InterPro" id="IPR040503">
    <property type="entry name" value="TRHO_N"/>
</dbReference>
<dbReference type="NCBIfam" id="NF002397">
    <property type="entry name" value="PRK01415.1"/>
    <property type="match status" value="1"/>
</dbReference>
<dbReference type="PANTHER" id="PTHR43268:SF3">
    <property type="entry name" value="RHODANESE-LIKE DOMAIN-CONTAINING PROTEIN 7-RELATED"/>
    <property type="match status" value="1"/>
</dbReference>
<dbReference type="PANTHER" id="PTHR43268">
    <property type="entry name" value="THIOSULFATE SULFURTRANSFERASE/RHODANESE-LIKE DOMAIN-CONTAINING PROTEIN 2"/>
    <property type="match status" value="1"/>
</dbReference>
<dbReference type="Pfam" id="PF00581">
    <property type="entry name" value="Rhodanese"/>
    <property type="match status" value="1"/>
</dbReference>
<dbReference type="Pfam" id="PF17773">
    <property type="entry name" value="UPF0176_N"/>
    <property type="match status" value="1"/>
</dbReference>
<dbReference type="SMART" id="SM00450">
    <property type="entry name" value="RHOD"/>
    <property type="match status" value="1"/>
</dbReference>
<dbReference type="SUPFAM" id="SSF52821">
    <property type="entry name" value="Rhodanese/Cell cycle control phosphatase"/>
    <property type="match status" value="1"/>
</dbReference>
<dbReference type="PROSITE" id="PS50206">
    <property type="entry name" value="RHODANESE_3"/>
    <property type="match status" value="1"/>
</dbReference>
<feature type="chain" id="PRO_1000013764" description="tRNA uridine(34) hydroxylase">
    <location>
        <begin position="1"/>
        <end position="247"/>
    </location>
</feature>
<feature type="domain" description="Rhodanese" evidence="1">
    <location>
        <begin position="124"/>
        <end position="218"/>
    </location>
</feature>
<feature type="active site" description="Cysteine persulfide intermediate" evidence="1">
    <location>
        <position position="178"/>
    </location>
</feature>
<gene>
    <name evidence="1" type="primary">trhO</name>
    <name type="ordered locus">A1C_00925</name>
</gene>
<sequence length="247" mass="27978">MSEKIAILSAYSFVNIEEPANLIPKLLLIGKRKYVRGTILLANEGFNGSFSGSYENVNLVLEELIKLTGPKDVNVKINYSDVHPFQKLKVRLKKEIVAMNVEGLNVDLFKGEYIEPKDWDEFITKQNVIVIDTRNDYEVEVGTFKSAISPNTKTFKQFPAWVQKNQGLLKGKRIAMVCTGGIRCEKSTSLLKSIGYDEVYHLKGGILQYLEDTQNKNNLWQGACFVFDDRRAVADDLSPVAGHWLQR</sequence>
<protein>
    <recommendedName>
        <fullName evidence="1">tRNA uridine(34) hydroxylase</fullName>
        <ecNumber evidence="1">1.14.-.-</ecNumber>
    </recommendedName>
    <alternativeName>
        <fullName evidence="1">tRNA hydroxylation protein O</fullName>
    </alternativeName>
</protein>
<proteinExistence type="inferred from homology"/>
<comment type="function">
    <text evidence="1">Catalyzes oxygen-dependent 5-hydroxyuridine (ho5U) modification at position 34 in tRNAs.</text>
</comment>
<comment type="catalytic activity">
    <reaction evidence="1">
        <text>uridine(34) in tRNA + AH2 + O2 = 5-hydroxyuridine(34) in tRNA + A + H2O</text>
        <dbReference type="Rhea" id="RHEA:64224"/>
        <dbReference type="Rhea" id="RHEA-COMP:11727"/>
        <dbReference type="Rhea" id="RHEA-COMP:13381"/>
        <dbReference type="ChEBI" id="CHEBI:13193"/>
        <dbReference type="ChEBI" id="CHEBI:15377"/>
        <dbReference type="ChEBI" id="CHEBI:15379"/>
        <dbReference type="ChEBI" id="CHEBI:17499"/>
        <dbReference type="ChEBI" id="CHEBI:65315"/>
        <dbReference type="ChEBI" id="CHEBI:136877"/>
    </reaction>
</comment>
<comment type="similarity">
    <text evidence="1">Belongs to the TrhO family.</text>
</comment>
<keyword id="KW-0560">Oxidoreductase</keyword>
<keyword id="KW-0819">tRNA processing</keyword>
<reference key="1">
    <citation type="submission" date="2007-09" db="EMBL/GenBank/DDBJ databases">
        <title>Complete genome sequence of Rickettsia akari.</title>
        <authorList>
            <person name="Madan A."/>
            <person name="Fahey J."/>
            <person name="Helton E."/>
            <person name="Ketteman M."/>
            <person name="Madan A."/>
            <person name="Rodrigues S."/>
            <person name="Sanchez A."/>
            <person name="Whiting M."/>
            <person name="Dasch G."/>
            <person name="Eremeeva M."/>
        </authorList>
    </citation>
    <scope>NUCLEOTIDE SEQUENCE [LARGE SCALE GENOMIC DNA]</scope>
    <source>
        <strain>Hartford</strain>
    </source>
</reference>
<evidence type="ECO:0000255" key="1">
    <source>
        <dbReference type="HAMAP-Rule" id="MF_00469"/>
    </source>
</evidence>
<organism>
    <name type="scientific">Rickettsia akari (strain Hartford)</name>
    <dbReference type="NCBI Taxonomy" id="293614"/>
    <lineage>
        <taxon>Bacteria</taxon>
        <taxon>Pseudomonadati</taxon>
        <taxon>Pseudomonadota</taxon>
        <taxon>Alphaproteobacteria</taxon>
        <taxon>Rickettsiales</taxon>
        <taxon>Rickettsiaceae</taxon>
        <taxon>Rickettsieae</taxon>
        <taxon>Rickettsia</taxon>
        <taxon>spotted fever group</taxon>
    </lineage>
</organism>
<accession>A8GM90</accession>